<accession>B5YJT2</accession>
<proteinExistence type="inferred from homology"/>
<keyword id="KW-0064">Aspartyl protease</keyword>
<keyword id="KW-0997">Cell inner membrane</keyword>
<keyword id="KW-1003">Cell membrane</keyword>
<keyword id="KW-0378">Hydrolase</keyword>
<keyword id="KW-0472">Membrane</keyword>
<keyword id="KW-0645">Protease</keyword>
<keyword id="KW-1185">Reference proteome</keyword>
<keyword id="KW-0812">Transmembrane</keyword>
<keyword id="KW-1133">Transmembrane helix</keyword>
<gene>
    <name evidence="1" type="primary">lspA</name>
    <name type="ordered locus">THEYE_A0655</name>
</gene>
<name>LSPA_THEYD</name>
<reference key="1">
    <citation type="submission" date="2008-08" db="EMBL/GenBank/DDBJ databases">
        <title>The complete genome sequence of Thermodesulfovibrio yellowstonii strain ATCC 51303 / DSM 11347 / YP87.</title>
        <authorList>
            <person name="Dodson R.J."/>
            <person name="Durkin A.S."/>
            <person name="Wu M."/>
            <person name="Eisen J."/>
            <person name="Sutton G."/>
        </authorList>
    </citation>
    <scope>NUCLEOTIDE SEQUENCE [LARGE SCALE GENOMIC DNA]</scope>
    <source>
        <strain>ATCC 51303 / DSM 11347 / YP87</strain>
    </source>
</reference>
<protein>
    <recommendedName>
        <fullName evidence="1">Lipoprotein signal peptidase</fullName>
        <ecNumber evidence="1">3.4.23.36</ecNumber>
    </recommendedName>
    <alternativeName>
        <fullName evidence="1">Prolipoprotein signal peptidase</fullName>
    </alternativeName>
    <alternativeName>
        <fullName evidence="1">Signal peptidase II</fullName>
        <shortName evidence="1">SPase II</shortName>
    </alternativeName>
</protein>
<evidence type="ECO:0000255" key="1">
    <source>
        <dbReference type="HAMAP-Rule" id="MF_00161"/>
    </source>
</evidence>
<feature type="chain" id="PRO_1000190807" description="Lipoprotein signal peptidase">
    <location>
        <begin position="1"/>
        <end position="147"/>
    </location>
</feature>
<feature type="transmembrane region" description="Helical" evidence="1">
    <location>
        <begin position="10"/>
        <end position="30"/>
    </location>
</feature>
<feature type="transmembrane region" description="Helical" evidence="1">
    <location>
        <begin position="34"/>
        <end position="54"/>
    </location>
</feature>
<feature type="transmembrane region" description="Helical" evidence="1">
    <location>
        <begin position="59"/>
        <end position="79"/>
    </location>
</feature>
<feature type="transmembrane region" description="Helical" evidence="1">
    <location>
        <begin position="87"/>
        <end position="107"/>
    </location>
</feature>
<feature type="transmembrane region" description="Helical" evidence="1">
    <location>
        <begin position="121"/>
        <end position="141"/>
    </location>
</feature>
<feature type="active site" evidence="1">
    <location>
        <position position="112"/>
    </location>
</feature>
<feature type="active site" evidence="1">
    <location>
        <position position="130"/>
    </location>
</feature>
<comment type="function">
    <text evidence="1">This protein specifically catalyzes the removal of signal peptides from prolipoproteins.</text>
</comment>
<comment type="catalytic activity">
    <reaction evidence="1">
        <text>Release of signal peptides from bacterial membrane prolipoproteins. Hydrolyzes -Xaa-Yaa-Zaa-|-(S,diacylglyceryl)Cys-, in which Xaa is hydrophobic (preferably Leu), and Yaa (Ala or Ser) and Zaa (Gly or Ala) have small, neutral side chains.</text>
        <dbReference type="EC" id="3.4.23.36"/>
    </reaction>
</comment>
<comment type="pathway">
    <text evidence="1">Protein modification; lipoprotein biosynthesis (signal peptide cleavage).</text>
</comment>
<comment type="subcellular location">
    <subcellularLocation>
        <location evidence="1">Cell inner membrane</location>
        <topology evidence="1">Multi-pass membrane protein</topology>
    </subcellularLocation>
</comment>
<comment type="similarity">
    <text evidence="1">Belongs to the peptidase A8 family.</text>
</comment>
<organism>
    <name type="scientific">Thermodesulfovibrio yellowstonii (strain ATCC 51303 / DSM 11347 / YP87)</name>
    <dbReference type="NCBI Taxonomy" id="289376"/>
    <lineage>
        <taxon>Bacteria</taxon>
        <taxon>Pseudomonadati</taxon>
        <taxon>Nitrospirota</taxon>
        <taxon>Thermodesulfovibrionia</taxon>
        <taxon>Thermodesulfovibrionales</taxon>
        <taxon>Thermodesulfovibrionaceae</taxon>
        <taxon>Thermodesulfovibrio</taxon>
    </lineage>
</organism>
<sequence>MSLKLYKTSISIFLILLIDQITKYLAIKFLSPDGIVKLLPFLNLVYVENTGTAFGMFKFLGSGFFIIIALVVTGFLVYMYFKDTQNWFIYSLIIAGALGNIIDRLIYGYVIDFIDLHLKNLHWPAFNVADSAISIGIVLFVYKNLKK</sequence>
<dbReference type="EC" id="3.4.23.36" evidence="1"/>
<dbReference type="EMBL" id="CP001147">
    <property type="protein sequence ID" value="ACI21609.1"/>
    <property type="molecule type" value="Genomic_DNA"/>
</dbReference>
<dbReference type="RefSeq" id="WP_012546319.1">
    <property type="nucleotide sequence ID" value="NC_011296.1"/>
</dbReference>
<dbReference type="RefSeq" id="YP_002248497.1">
    <property type="nucleotide sequence ID" value="NC_011296.1"/>
</dbReference>
<dbReference type="SMR" id="B5YJT2"/>
<dbReference type="FunCoup" id="B5YJT2">
    <property type="interactions" value="293"/>
</dbReference>
<dbReference type="STRING" id="289376.THEYE_A0655"/>
<dbReference type="EnsemblBacteria" id="ACI21609">
    <property type="protein sequence ID" value="ACI21609"/>
    <property type="gene ID" value="THEYE_A0655"/>
</dbReference>
<dbReference type="KEGG" id="tye:THEYE_A0655"/>
<dbReference type="PATRIC" id="fig|289376.4.peg.648"/>
<dbReference type="eggNOG" id="COG0597">
    <property type="taxonomic scope" value="Bacteria"/>
</dbReference>
<dbReference type="HOGENOM" id="CLU_083252_4_0_0"/>
<dbReference type="InParanoid" id="B5YJT2"/>
<dbReference type="OrthoDB" id="9810259at2"/>
<dbReference type="UniPathway" id="UPA00665"/>
<dbReference type="Proteomes" id="UP000000718">
    <property type="component" value="Chromosome"/>
</dbReference>
<dbReference type="GO" id="GO:0005886">
    <property type="term" value="C:plasma membrane"/>
    <property type="evidence" value="ECO:0000318"/>
    <property type="project" value="GO_Central"/>
</dbReference>
<dbReference type="GO" id="GO:0004190">
    <property type="term" value="F:aspartic-type endopeptidase activity"/>
    <property type="evidence" value="ECO:0007669"/>
    <property type="project" value="UniProtKB-UniRule"/>
</dbReference>
<dbReference type="GO" id="GO:0004175">
    <property type="term" value="F:endopeptidase activity"/>
    <property type="evidence" value="ECO:0000318"/>
    <property type="project" value="GO_Central"/>
</dbReference>
<dbReference type="GO" id="GO:0006508">
    <property type="term" value="P:proteolysis"/>
    <property type="evidence" value="ECO:0007669"/>
    <property type="project" value="UniProtKB-KW"/>
</dbReference>
<dbReference type="HAMAP" id="MF_00161">
    <property type="entry name" value="LspA"/>
    <property type="match status" value="1"/>
</dbReference>
<dbReference type="InterPro" id="IPR001872">
    <property type="entry name" value="Peptidase_A8"/>
</dbReference>
<dbReference type="NCBIfam" id="TIGR00077">
    <property type="entry name" value="lspA"/>
    <property type="match status" value="1"/>
</dbReference>
<dbReference type="PANTHER" id="PTHR33695">
    <property type="entry name" value="LIPOPROTEIN SIGNAL PEPTIDASE"/>
    <property type="match status" value="1"/>
</dbReference>
<dbReference type="PANTHER" id="PTHR33695:SF1">
    <property type="entry name" value="LIPOPROTEIN SIGNAL PEPTIDASE"/>
    <property type="match status" value="1"/>
</dbReference>
<dbReference type="Pfam" id="PF01252">
    <property type="entry name" value="Peptidase_A8"/>
    <property type="match status" value="1"/>
</dbReference>
<dbReference type="PRINTS" id="PR00781">
    <property type="entry name" value="LIPOSIGPTASE"/>
</dbReference>
<dbReference type="PROSITE" id="PS00855">
    <property type="entry name" value="SPASE_II"/>
    <property type="match status" value="1"/>
</dbReference>